<reference key="1">
    <citation type="journal article" date="2008" name="J. Bacteriol.">
        <title>Genome sequence of Staphylococcus aureus strain Newman and comparative analysis of staphylococcal genomes: polymorphism and evolution of two major pathogenicity islands.</title>
        <authorList>
            <person name="Baba T."/>
            <person name="Bae T."/>
            <person name="Schneewind O."/>
            <person name="Takeuchi F."/>
            <person name="Hiramatsu K."/>
        </authorList>
    </citation>
    <scope>NUCLEOTIDE SEQUENCE [LARGE SCALE GENOMIC DNA]</scope>
    <source>
        <strain>Newman</strain>
    </source>
</reference>
<organism>
    <name type="scientific">Staphylococcus aureus (strain Newman)</name>
    <dbReference type="NCBI Taxonomy" id="426430"/>
    <lineage>
        <taxon>Bacteria</taxon>
        <taxon>Bacillati</taxon>
        <taxon>Bacillota</taxon>
        <taxon>Bacilli</taxon>
        <taxon>Bacillales</taxon>
        <taxon>Staphylococcaceae</taxon>
        <taxon>Staphylococcus</taxon>
    </lineage>
</organism>
<evidence type="ECO:0000255" key="1">
    <source>
        <dbReference type="HAMAP-Rule" id="MF_00186"/>
    </source>
</evidence>
<keyword id="KW-0067">ATP-binding</keyword>
<keyword id="KW-0319">Glycerol metabolism</keyword>
<keyword id="KW-0418">Kinase</keyword>
<keyword id="KW-0547">Nucleotide-binding</keyword>
<keyword id="KW-0597">Phosphoprotein</keyword>
<keyword id="KW-0808">Transferase</keyword>
<feature type="chain" id="PRO_1000071685" description="Glycerol kinase">
    <location>
        <begin position="1"/>
        <end position="498"/>
    </location>
</feature>
<feature type="binding site" evidence="1">
    <location>
        <position position="12"/>
    </location>
    <ligand>
        <name>ADP</name>
        <dbReference type="ChEBI" id="CHEBI:456216"/>
    </ligand>
</feature>
<feature type="binding site" evidence="1">
    <location>
        <position position="12"/>
    </location>
    <ligand>
        <name>ATP</name>
        <dbReference type="ChEBI" id="CHEBI:30616"/>
    </ligand>
</feature>
<feature type="binding site" evidence="1">
    <location>
        <position position="12"/>
    </location>
    <ligand>
        <name>sn-glycerol 3-phosphate</name>
        <dbReference type="ChEBI" id="CHEBI:57597"/>
    </ligand>
</feature>
<feature type="binding site" evidence="1">
    <location>
        <position position="13"/>
    </location>
    <ligand>
        <name>ATP</name>
        <dbReference type="ChEBI" id="CHEBI:30616"/>
    </ligand>
</feature>
<feature type="binding site" evidence="1">
    <location>
        <position position="14"/>
    </location>
    <ligand>
        <name>ATP</name>
        <dbReference type="ChEBI" id="CHEBI:30616"/>
    </ligand>
</feature>
<feature type="binding site" evidence="1">
    <location>
        <position position="16"/>
    </location>
    <ligand>
        <name>ADP</name>
        <dbReference type="ChEBI" id="CHEBI:456216"/>
    </ligand>
</feature>
<feature type="binding site" evidence="1">
    <location>
        <position position="82"/>
    </location>
    <ligand>
        <name>glycerol</name>
        <dbReference type="ChEBI" id="CHEBI:17754"/>
    </ligand>
</feature>
<feature type="binding site" evidence="1">
    <location>
        <position position="82"/>
    </location>
    <ligand>
        <name>sn-glycerol 3-phosphate</name>
        <dbReference type="ChEBI" id="CHEBI:57597"/>
    </ligand>
</feature>
<feature type="binding site" evidence="1">
    <location>
        <position position="83"/>
    </location>
    <ligand>
        <name>glycerol</name>
        <dbReference type="ChEBI" id="CHEBI:17754"/>
    </ligand>
</feature>
<feature type="binding site" evidence="1">
    <location>
        <position position="83"/>
    </location>
    <ligand>
        <name>sn-glycerol 3-phosphate</name>
        <dbReference type="ChEBI" id="CHEBI:57597"/>
    </ligand>
</feature>
<feature type="binding site" evidence="1">
    <location>
        <position position="134"/>
    </location>
    <ligand>
        <name>glycerol</name>
        <dbReference type="ChEBI" id="CHEBI:17754"/>
    </ligand>
</feature>
<feature type="binding site" evidence="1">
    <location>
        <position position="134"/>
    </location>
    <ligand>
        <name>sn-glycerol 3-phosphate</name>
        <dbReference type="ChEBI" id="CHEBI:57597"/>
    </ligand>
</feature>
<feature type="binding site" evidence="1">
    <location>
        <position position="244"/>
    </location>
    <ligand>
        <name>glycerol</name>
        <dbReference type="ChEBI" id="CHEBI:17754"/>
    </ligand>
</feature>
<feature type="binding site" evidence="1">
    <location>
        <position position="244"/>
    </location>
    <ligand>
        <name>sn-glycerol 3-phosphate</name>
        <dbReference type="ChEBI" id="CHEBI:57597"/>
    </ligand>
</feature>
<feature type="binding site" evidence="1">
    <location>
        <position position="245"/>
    </location>
    <ligand>
        <name>glycerol</name>
        <dbReference type="ChEBI" id="CHEBI:17754"/>
    </ligand>
</feature>
<feature type="binding site" evidence="1">
    <location>
        <position position="266"/>
    </location>
    <ligand>
        <name>ADP</name>
        <dbReference type="ChEBI" id="CHEBI:456216"/>
    </ligand>
</feature>
<feature type="binding site" evidence="1">
    <location>
        <position position="266"/>
    </location>
    <ligand>
        <name>ATP</name>
        <dbReference type="ChEBI" id="CHEBI:30616"/>
    </ligand>
</feature>
<feature type="binding site" evidence="1">
    <location>
        <position position="309"/>
    </location>
    <ligand>
        <name>ADP</name>
        <dbReference type="ChEBI" id="CHEBI:456216"/>
    </ligand>
</feature>
<feature type="binding site" evidence="1">
    <location>
        <position position="309"/>
    </location>
    <ligand>
        <name>ATP</name>
        <dbReference type="ChEBI" id="CHEBI:30616"/>
    </ligand>
</feature>
<feature type="binding site" evidence="1">
    <location>
        <position position="313"/>
    </location>
    <ligand>
        <name>ATP</name>
        <dbReference type="ChEBI" id="CHEBI:30616"/>
    </ligand>
</feature>
<feature type="binding site" evidence="1">
    <location>
        <position position="410"/>
    </location>
    <ligand>
        <name>ADP</name>
        <dbReference type="ChEBI" id="CHEBI:456216"/>
    </ligand>
</feature>
<feature type="binding site" evidence="1">
    <location>
        <position position="410"/>
    </location>
    <ligand>
        <name>ATP</name>
        <dbReference type="ChEBI" id="CHEBI:30616"/>
    </ligand>
</feature>
<feature type="binding site" evidence="1">
    <location>
        <position position="414"/>
    </location>
    <ligand>
        <name>ADP</name>
        <dbReference type="ChEBI" id="CHEBI:456216"/>
    </ligand>
</feature>
<feature type="modified residue" description="Phosphohistidine; by HPr" evidence="1">
    <location>
        <position position="230"/>
    </location>
</feature>
<comment type="function">
    <text evidence="1">Key enzyme in the regulation of glycerol uptake and metabolism. Catalyzes the phosphorylation of glycerol to yield sn-glycerol 3-phosphate.</text>
</comment>
<comment type="catalytic activity">
    <reaction evidence="1">
        <text>glycerol + ATP = sn-glycerol 3-phosphate + ADP + H(+)</text>
        <dbReference type="Rhea" id="RHEA:21644"/>
        <dbReference type="ChEBI" id="CHEBI:15378"/>
        <dbReference type="ChEBI" id="CHEBI:17754"/>
        <dbReference type="ChEBI" id="CHEBI:30616"/>
        <dbReference type="ChEBI" id="CHEBI:57597"/>
        <dbReference type="ChEBI" id="CHEBI:456216"/>
        <dbReference type="EC" id="2.7.1.30"/>
    </reaction>
</comment>
<comment type="activity regulation">
    <text evidence="1">Activated by phosphorylation and inhibited by fructose 1,6-bisphosphate (FBP).</text>
</comment>
<comment type="pathway">
    <text evidence="1">Polyol metabolism; glycerol degradation via glycerol kinase pathway; sn-glycerol 3-phosphate from glycerol: step 1/1.</text>
</comment>
<comment type="subunit">
    <text evidence="1">Homotetramer and homodimer (in equilibrium).</text>
</comment>
<comment type="PTM">
    <text evidence="1">The phosphoenolpyruvate-dependent sugar phosphotransferase system (PTS), including enzyme I, and histidine-containing protein (HPr) are required for the phosphorylation, which leads to the activation of the enzyme.</text>
</comment>
<comment type="similarity">
    <text evidence="1">Belongs to the FGGY kinase family.</text>
</comment>
<accession>A6QGJ8</accession>
<proteinExistence type="inferred from homology"/>
<sequence>MEKYILSIDQGTTSSRAILFNQKGEIAGVAQREFKQYFPQSGWVEHDANEIWTSVLAVMTEVINENDVRADQIAGIGITNQRETTVVWDKHTGRPIYHAIVWQSRQTQSICSELKQQGYEQTFRDKTGLLLDPYFAGTKVKWILDNVEGAREKAENGDLLFGTIDTWLVWKLSGKAAHITDYSNASRTLMFNIHDLEWDDELLELLTVPKNMLPEVKASSEVYGKTIDYHFYGQEVPIAGVAGDQQAALFGQACFERGDVKNTYGTGGFMLMNTGDKAVKSESGLLTTIAYGIDGKVNYALEGSIFVSGSAIQWLRDGLRMINSAPQSESYATRVDSTEGVYVVPAFVGLGTPYWDSEARGAIFGLTRGTEKEHFIRATLESLCYQTRDVMEAMSKDSGIDVQSLRVDGGAVKNNFIMQFQADIVNTSVERPEIQETTALGAAFLAGLAVGFWESKDDIAKNWKLEEKFDPKMDEGEREKLYRGWKKAVEATQVFKTE</sequence>
<gene>
    <name evidence="1" type="primary">glpK</name>
    <name type="ordered locus">NWMN_1208</name>
</gene>
<protein>
    <recommendedName>
        <fullName evidence="1">Glycerol kinase</fullName>
        <ecNumber evidence="1">2.7.1.30</ecNumber>
    </recommendedName>
    <alternativeName>
        <fullName evidence="1">ATP:glycerol 3-phosphotransferase</fullName>
    </alternativeName>
    <alternativeName>
        <fullName evidence="1">Glycerokinase</fullName>
        <shortName evidence="1">GK</shortName>
    </alternativeName>
</protein>
<name>GLPK_STAAE</name>
<dbReference type="EC" id="2.7.1.30" evidence="1"/>
<dbReference type="EMBL" id="AP009351">
    <property type="protein sequence ID" value="BAF67480.1"/>
    <property type="molecule type" value="Genomic_DNA"/>
</dbReference>
<dbReference type="RefSeq" id="WP_000417369.1">
    <property type="nucleotide sequence ID" value="NZ_JBBIAE010000001.1"/>
</dbReference>
<dbReference type="SMR" id="A6QGJ8"/>
<dbReference type="KEGG" id="sae:NWMN_1208"/>
<dbReference type="HOGENOM" id="CLU_009281_2_3_9"/>
<dbReference type="UniPathway" id="UPA00618">
    <property type="reaction ID" value="UER00672"/>
</dbReference>
<dbReference type="Proteomes" id="UP000006386">
    <property type="component" value="Chromosome"/>
</dbReference>
<dbReference type="GO" id="GO:0005829">
    <property type="term" value="C:cytosol"/>
    <property type="evidence" value="ECO:0007669"/>
    <property type="project" value="TreeGrafter"/>
</dbReference>
<dbReference type="GO" id="GO:0005524">
    <property type="term" value="F:ATP binding"/>
    <property type="evidence" value="ECO:0007669"/>
    <property type="project" value="UniProtKB-UniRule"/>
</dbReference>
<dbReference type="GO" id="GO:0004370">
    <property type="term" value="F:glycerol kinase activity"/>
    <property type="evidence" value="ECO:0000250"/>
    <property type="project" value="UniProtKB"/>
</dbReference>
<dbReference type="GO" id="GO:0019563">
    <property type="term" value="P:glycerol catabolic process"/>
    <property type="evidence" value="ECO:0007669"/>
    <property type="project" value="UniProtKB-UniRule"/>
</dbReference>
<dbReference type="GO" id="GO:0006071">
    <property type="term" value="P:glycerol metabolic process"/>
    <property type="evidence" value="ECO:0000250"/>
    <property type="project" value="UniProtKB"/>
</dbReference>
<dbReference type="GO" id="GO:0006072">
    <property type="term" value="P:glycerol-3-phosphate metabolic process"/>
    <property type="evidence" value="ECO:0007669"/>
    <property type="project" value="InterPro"/>
</dbReference>
<dbReference type="CDD" id="cd07786">
    <property type="entry name" value="FGGY_EcGK_like"/>
    <property type="match status" value="1"/>
</dbReference>
<dbReference type="FunFam" id="3.30.420.40:FF:000007">
    <property type="entry name" value="Glycerol kinase"/>
    <property type="match status" value="1"/>
</dbReference>
<dbReference type="FunFam" id="3.30.420.40:FF:000008">
    <property type="entry name" value="Glycerol kinase"/>
    <property type="match status" value="1"/>
</dbReference>
<dbReference type="Gene3D" id="3.30.420.40">
    <property type="match status" value="2"/>
</dbReference>
<dbReference type="HAMAP" id="MF_00186">
    <property type="entry name" value="Glycerol_kin"/>
    <property type="match status" value="1"/>
</dbReference>
<dbReference type="InterPro" id="IPR043129">
    <property type="entry name" value="ATPase_NBD"/>
</dbReference>
<dbReference type="InterPro" id="IPR000577">
    <property type="entry name" value="Carb_kinase_FGGY"/>
</dbReference>
<dbReference type="InterPro" id="IPR018483">
    <property type="entry name" value="Carb_kinase_FGGY_CS"/>
</dbReference>
<dbReference type="InterPro" id="IPR018485">
    <property type="entry name" value="FGGY_C"/>
</dbReference>
<dbReference type="InterPro" id="IPR018484">
    <property type="entry name" value="FGGY_N"/>
</dbReference>
<dbReference type="InterPro" id="IPR005999">
    <property type="entry name" value="Glycerol_kin"/>
</dbReference>
<dbReference type="NCBIfam" id="TIGR01311">
    <property type="entry name" value="glycerol_kin"/>
    <property type="match status" value="1"/>
</dbReference>
<dbReference type="NCBIfam" id="NF000756">
    <property type="entry name" value="PRK00047.1"/>
    <property type="match status" value="1"/>
</dbReference>
<dbReference type="PANTHER" id="PTHR10196:SF69">
    <property type="entry name" value="GLYCEROL KINASE"/>
    <property type="match status" value="1"/>
</dbReference>
<dbReference type="PANTHER" id="PTHR10196">
    <property type="entry name" value="SUGAR KINASE"/>
    <property type="match status" value="1"/>
</dbReference>
<dbReference type="Pfam" id="PF02782">
    <property type="entry name" value="FGGY_C"/>
    <property type="match status" value="1"/>
</dbReference>
<dbReference type="Pfam" id="PF00370">
    <property type="entry name" value="FGGY_N"/>
    <property type="match status" value="1"/>
</dbReference>
<dbReference type="PIRSF" id="PIRSF000538">
    <property type="entry name" value="GlpK"/>
    <property type="match status" value="1"/>
</dbReference>
<dbReference type="SUPFAM" id="SSF53067">
    <property type="entry name" value="Actin-like ATPase domain"/>
    <property type="match status" value="2"/>
</dbReference>
<dbReference type="PROSITE" id="PS00445">
    <property type="entry name" value="FGGY_KINASES_2"/>
    <property type="match status" value="1"/>
</dbReference>